<accession>Q62M52</accession>
<keyword id="KW-0963">Cytoplasm</keyword>
<keyword id="KW-0489">Methyltransferase</keyword>
<keyword id="KW-1185">Reference proteome</keyword>
<keyword id="KW-0949">S-adenosyl-L-methionine</keyword>
<keyword id="KW-0808">Transferase</keyword>
<keyword id="KW-0819">tRNA processing</keyword>
<comment type="function">
    <text evidence="1">Specifically methylates guanosine-37 in various tRNAs.</text>
</comment>
<comment type="catalytic activity">
    <reaction evidence="1">
        <text>guanosine(37) in tRNA + S-adenosyl-L-methionine = N(1)-methylguanosine(37) in tRNA + S-adenosyl-L-homocysteine + H(+)</text>
        <dbReference type="Rhea" id="RHEA:36899"/>
        <dbReference type="Rhea" id="RHEA-COMP:10145"/>
        <dbReference type="Rhea" id="RHEA-COMP:10147"/>
        <dbReference type="ChEBI" id="CHEBI:15378"/>
        <dbReference type="ChEBI" id="CHEBI:57856"/>
        <dbReference type="ChEBI" id="CHEBI:59789"/>
        <dbReference type="ChEBI" id="CHEBI:73542"/>
        <dbReference type="ChEBI" id="CHEBI:74269"/>
        <dbReference type="EC" id="2.1.1.228"/>
    </reaction>
</comment>
<comment type="subunit">
    <text evidence="1">Homodimer.</text>
</comment>
<comment type="subcellular location">
    <subcellularLocation>
        <location evidence="1">Cytoplasm</location>
    </subcellularLocation>
</comment>
<comment type="similarity">
    <text evidence="1">Belongs to the RNA methyltransferase TrmD family.</text>
</comment>
<proteinExistence type="inferred from homology"/>
<sequence length="264" mass="29000">MDEATQSAIQFDVVTLFPEMFRALTDWGITSRAVKQGRFGLRTWNPRDFTTDNYRTVDDRPYGGGPGMVMLAKPLEAAIGAAKAAQAAQGVATSRVVMMSPQGAPLTHERVARMAAEPGVVLLCGRYEAIDQRLIDRCVDEELSLGDFVLSGGELPAMALMDAVVRLLPGVLNDAQSAVQDSFADGLLDCPHYTRPEEYEGVRVPDVLLGGHHAEIERWRRQEALRNTIAKRPDLIARARREKLLSRADEAWLASLAKEAKQAS</sequence>
<feature type="chain" id="PRO_0000060348" description="tRNA (guanine-N(1)-)-methyltransferase">
    <location>
        <begin position="1"/>
        <end position="264"/>
    </location>
</feature>
<feature type="binding site" evidence="1">
    <location>
        <position position="125"/>
    </location>
    <ligand>
        <name>S-adenosyl-L-methionine</name>
        <dbReference type="ChEBI" id="CHEBI:59789"/>
    </ligand>
</feature>
<feature type="binding site" evidence="1">
    <location>
        <begin position="145"/>
        <end position="150"/>
    </location>
    <ligand>
        <name>S-adenosyl-L-methionine</name>
        <dbReference type="ChEBI" id="CHEBI:59789"/>
    </ligand>
</feature>
<gene>
    <name evidence="1" type="primary">trmD</name>
    <name type="ordered locus">BMA0401</name>
</gene>
<evidence type="ECO:0000255" key="1">
    <source>
        <dbReference type="HAMAP-Rule" id="MF_00605"/>
    </source>
</evidence>
<organism>
    <name type="scientific">Burkholderia mallei (strain ATCC 23344)</name>
    <dbReference type="NCBI Taxonomy" id="243160"/>
    <lineage>
        <taxon>Bacteria</taxon>
        <taxon>Pseudomonadati</taxon>
        <taxon>Pseudomonadota</taxon>
        <taxon>Betaproteobacteria</taxon>
        <taxon>Burkholderiales</taxon>
        <taxon>Burkholderiaceae</taxon>
        <taxon>Burkholderia</taxon>
        <taxon>pseudomallei group</taxon>
    </lineage>
</organism>
<name>TRMD_BURMA</name>
<dbReference type="EC" id="2.1.1.228" evidence="1"/>
<dbReference type="EMBL" id="CP000010">
    <property type="protein sequence ID" value="AAU48778.1"/>
    <property type="molecule type" value="Genomic_DNA"/>
</dbReference>
<dbReference type="RefSeq" id="WP_004189914.1">
    <property type="nucleotide sequence ID" value="NC_006348.1"/>
</dbReference>
<dbReference type="RefSeq" id="YP_102216.1">
    <property type="nucleotide sequence ID" value="NC_006348.1"/>
</dbReference>
<dbReference type="SMR" id="Q62M52"/>
<dbReference type="GeneID" id="93061077"/>
<dbReference type="KEGG" id="bma:BMA0401"/>
<dbReference type="PATRIC" id="fig|243160.12.peg.406"/>
<dbReference type="eggNOG" id="COG0336">
    <property type="taxonomic scope" value="Bacteria"/>
</dbReference>
<dbReference type="HOGENOM" id="CLU_047363_0_2_4"/>
<dbReference type="Proteomes" id="UP000006693">
    <property type="component" value="Chromosome 1"/>
</dbReference>
<dbReference type="GO" id="GO:0005829">
    <property type="term" value="C:cytosol"/>
    <property type="evidence" value="ECO:0007669"/>
    <property type="project" value="TreeGrafter"/>
</dbReference>
<dbReference type="GO" id="GO:0052906">
    <property type="term" value="F:tRNA (guanine(37)-N1)-methyltransferase activity"/>
    <property type="evidence" value="ECO:0007669"/>
    <property type="project" value="UniProtKB-UniRule"/>
</dbReference>
<dbReference type="GO" id="GO:0002939">
    <property type="term" value="P:tRNA N1-guanine methylation"/>
    <property type="evidence" value="ECO:0007669"/>
    <property type="project" value="TreeGrafter"/>
</dbReference>
<dbReference type="CDD" id="cd18080">
    <property type="entry name" value="TrmD-like"/>
    <property type="match status" value="1"/>
</dbReference>
<dbReference type="FunFam" id="1.10.1270.20:FF:000001">
    <property type="entry name" value="tRNA (guanine-N(1)-)-methyltransferase"/>
    <property type="match status" value="1"/>
</dbReference>
<dbReference type="FunFam" id="3.40.1280.10:FF:000001">
    <property type="entry name" value="tRNA (guanine-N(1)-)-methyltransferase"/>
    <property type="match status" value="1"/>
</dbReference>
<dbReference type="Gene3D" id="3.40.1280.10">
    <property type="match status" value="1"/>
</dbReference>
<dbReference type="Gene3D" id="1.10.1270.20">
    <property type="entry name" value="tRNA(m1g37)methyltransferase, domain 2"/>
    <property type="match status" value="1"/>
</dbReference>
<dbReference type="HAMAP" id="MF_00605">
    <property type="entry name" value="TrmD"/>
    <property type="match status" value="1"/>
</dbReference>
<dbReference type="InterPro" id="IPR029028">
    <property type="entry name" value="Alpha/beta_knot_MTases"/>
</dbReference>
<dbReference type="InterPro" id="IPR023148">
    <property type="entry name" value="tRNA_m1G_MeTrfase_C_sf"/>
</dbReference>
<dbReference type="InterPro" id="IPR002649">
    <property type="entry name" value="tRNA_m1G_MeTrfase_TrmD"/>
</dbReference>
<dbReference type="InterPro" id="IPR029026">
    <property type="entry name" value="tRNA_m1G_MTases_N"/>
</dbReference>
<dbReference type="InterPro" id="IPR016009">
    <property type="entry name" value="tRNA_MeTrfase_TRMD/TRM10"/>
</dbReference>
<dbReference type="NCBIfam" id="NF000648">
    <property type="entry name" value="PRK00026.1"/>
    <property type="match status" value="1"/>
</dbReference>
<dbReference type="NCBIfam" id="TIGR00088">
    <property type="entry name" value="trmD"/>
    <property type="match status" value="1"/>
</dbReference>
<dbReference type="PANTHER" id="PTHR46417">
    <property type="entry name" value="TRNA (GUANINE-N(1)-)-METHYLTRANSFERASE"/>
    <property type="match status" value="1"/>
</dbReference>
<dbReference type="PANTHER" id="PTHR46417:SF1">
    <property type="entry name" value="TRNA (GUANINE-N(1)-)-METHYLTRANSFERASE"/>
    <property type="match status" value="1"/>
</dbReference>
<dbReference type="Pfam" id="PF01746">
    <property type="entry name" value="tRNA_m1G_MT"/>
    <property type="match status" value="1"/>
</dbReference>
<dbReference type="PIRSF" id="PIRSF000386">
    <property type="entry name" value="tRNA_mtase"/>
    <property type="match status" value="1"/>
</dbReference>
<dbReference type="SUPFAM" id="SSF75217">
    <property type="entry name" value="alpha/beta knot"/>
    <property type="match status" value="1"/>
</dbReference>
<protein>
    <recommendedName>
        <fullName evidence="1">tRNA (guanine-N(1)-)-methyltransferase</fullName>
        <ecNumber evidence="1">2.1.1.228</ecNumber>
    </recommendedName>
    <alternativeName>
        <fullName evidence="1">M1G-methyltransferase</fullName>
    </alternativeName>
    <alternativeName>
        <fullName evidence="1">tRNA [GM37] methyltransferase</fullName>
    </alternativeName>
</protein>
<reference key="1">
    <citation type="journal article" date="2004" name="Proc. Natl. Acad. Sci. U.S.A.">
        <title>Structural flexibility in the Burkholderia mallei genome.</title>
        <authorList>
            <person name="Nierman W.C."/>
            <person name="DeShazer D."/>
            <person name="Kim H.S."/>
            <person name="Tettelin H."/>
            <person name="Nelson K.E."/>
            <person name="Feldblyum T.V."/>
            <person name="Ulrich R.L."/>
            <person name="Ronning C.M."/>
            <person name="Brinkac L.M."/>
            <person name="Daugherty S.C."/>
            <person name="Davidsen T.D."/>
            <person name="DeBoy R.T."/>
            <person name="Dimitrov G."/>
            <person name="Dodson R.J."/>
            <person name="Durkin A.S."/>
            <person name="Gwinn M.L."/>
            <person name="Haft D.H."/>
            <person name="Khouri H.M."/>
            <person name="Kolonay J.F."/>
            <person name="Madupu R."/>
            <person name="Mohammoud Y."/>
            <person name="Nelson W.C."/>
            <person name="Radune D."/>
            <person name="Romero C.M."/>
            <person name="Sarria S."/>
            <person name="Selengut J."/>
            <person name="Shamblin C."/>
            <person name="Sullivan S.A."/>
            <person name="White O."/>
            <person name="Yu Y."/>
            <person name="Zafar N."/>
            <person name="Zhou L."/>
            <person name="Fraser C.M."/>
        </authorList>
    </citation>
    <scope>NUCLEOTIDE SEQUENCE [LARGE SCALE GENOMIC DNA]</scope>
    <source>
        <strain>ATCC 23344</strain>
    </source>
</reference>